<comment type="function">
    <text evidence="8">Carboxylesterase that acts as a key negative regulator of the Wnt signaling pathway by specifically mediating depalmitoleoylation of WNT proteins. Serine palmitoleoylation of WNT proteins is required for efficient binding to frizzled receptors. Functions in the prospective ectoderm and is required for neural induction.</text>
</comment>
<comment type="catalytic activity">
    <reaction evidence="1">
        <text>[Wnt protein]-O-(9Z)-hexadecenoyl-L-serine + H2O = [Wnt protein]-L-serine + (9Z)-hexadecenoate + H(+)</text>
        <dbReference type="Rhea" id="RHEA:45340"/>
        <dbReference type="Rhea" id="RHEA-COMP:11170"/>
        <dbReference type="Rhea" id="RHEA-COMP:11171"/>
        <dbReference type="ChEBI" id="CHEBI:15377"/>
        <dbReference type="ChEBI" id="CHEBI:15378"/>
        <dbReference type="ChEBI" id="CHEBI:29999"/>
        <dbReference type="ChEBI" id="CHEBI:32372"/>
        <dbReference type="ChEBI" id="CHEBI:85189"/>
        <dbReference type="EC" id="3.1.1.98"/>
    </reaction>
</comment>
<comment type="subcellular location">
    <subcellularLocation>
        <location evidence="2">Secreted</location>
    </subcellularLocation>
</comment>
<comment type="tissue specificity">
    <text evidence="5">Expressed in the egg and through cleavage to gastrulation stages. Enriched in the animal (prospective ectoderm) and dorsal regions in early gastrula. Shows a dynamic expression during embryogenesis, in particular during neural induction and antero-posterior (AP) patterning.</text>
</comment>
<comment type="developmental stage">
    <text evidence="5">Present in animal blastomeres at 4-cell and stage 6.5. At stages 8.5 and 9.5 (blastula), detected broadly in the animal region. At stage 10 (early gastrula), remains broadly expressed animally, but also detected in the dorsal marginal zone (the Organizer), with lower expression in the ventral marginal zone. At stage 11, found in the forming neural plate in a noticeable antero-posterior (AP) gradient (anterior high and posterior low), with additional weaker expression in the head mesoderm. Remains detectable, but becomes faint in the neural plate at stage 13. By stage 15, detected at the anterior border of the neural plate and in ventro-lateral epidermis excluding the neural plate. Later, it is detected in the cement gland (an anterior organ) at tail bud stages (stage 25), in branchial arches, the otic vesicle, and developing pronephros, with diffused expression in the head (stage 35).</text>
</comment>
<comment type="similarity">
    <text evidence="7">Belongs to the pectinacetylesterase family. Notum subfamily.</text>
</comment>
<accession>A0A0D3QS99</accession>
<sequence>MAGALCVTLLLLLSTNTVSGRKTWRRRGQQIVPSGRERSEGGDESFPLDFTAVEGNMDNFMAQIKSLAQSLYPCSAQRLDDEMKLHILHNKSVTCNDGSSAGYYLKESKGSRRWLVFLEGGWYCISHENCDLRYDTMRRLMSSKAWPPAKTASGILSTQPEENPHWWNANMVFIPYCSSDVWSGASPKTEKSGYAFMGSLIIQEVVKELLGKGLDAAKVLLLAGSSAGGTGVLLNVDLVADLLEELGYPGIQVRGLSDSGWFLDNKQYRRTDCTDIITCAPTEAIQRGIRYWSSMVPERCKQQFKEGEEWNCFFGYKIYPTLRSPVFVVQWLFDEAQLTVDNVHLSGQPVQESQWLYIQNLGRELRNTLKDVGASFAPACLAHEVITRSHWTEIQVRGTSLPRALHCWDRRLQETNKNSKVPLKGCPFHLMDSCPWPQCNPTCPSIRDHFTGQEMSVVQFLMHLGFDVQKMASQQGMEPGKLLGVLSS</sequence>
<keyword id="KW-0325">Glycoprotein</keyword>
<keyword id="KW-0378">Hydrolase</keyword>
<keyword id="KW-1185">Reference proteome</keyword>
<keyword id="KW-0964">Secreted</keyword>
<keyword id="KW-0719">Serine esterase</keyword>
<keyword id="KW-0732">Signal</keyword>
<keyword id="KW-0879">Wnt signaling pathway</keyword>
<organism evidence="9">
    <name type="scientific">Xenopus laevis</name>
    <name type="common">African clawed frog</name>
    <dbReference type="NCBI Taxonomy" id="8355"/>
    <lineage>
        <taxon>Eukaryota</taxon>
        <taxon>Metazoa</taxon>
        <taxon>Chordata</taxon>
        <taxon>Craniata</taxon>
        <taxon>Vertebrata</taxon>
        <taxon>Euteleostomi</taxon>
        <taxon>Amphibia</taxon>
        <taxon>Batrachia</taxon>
        <taxon>Anura</taxon>
        <taxon>Pipoidea</taxon>
        <taxon>Pipidae</taxon>
        <taxon>Xenopodinae</taxon>
        <taxon>Xenopus</taxon>
        <taxon>Xenopus</taxon>
    </lineage>
</organism>
<name>NOT1_XENLA</name>
<protein>
    <recommendedName>
        <fullName evidence="1">Palmitoleoyl-protein carboxylesterase notum1</fullName>
        <ecNumber evidence="1">3.1.1.98</ecNumber>
    </recommendedName>
</protein>
<gene>
    <name evidence="6" type="primary">notum1</name>
</gene>
<feature type="signal peptide" evidence="3">
    <location>
        <begin position="1"/>
        <end position="20"/>
    </location>
</feature>
<feature type="chain" id="PRO_0000433427" description="Palmitoleoyl-protein carboxylesterase notum1" evidence="3">
    <location>
        <begin position="21"/>
        <end position="488"/>
    </location>
</feature>
<feature type="active site" description="Charge relay system" evidence="1">
    <location>
        <position position="226"/>
    </location>
</feature>
<feature type="active site" description="Charge relay system" evidence="1">
    <location>
        <position position="334"/>
    </location>
</feature>
<feature type="active site" description="Charge relay system" evidence="1">
    <location>
        <position position="383"/>
    </location>
</feature>
<feature type="glycosylation site" description="N-linked (GlcNAc...) asparagine" evidence="4">
    <location>
        <position position="90"/>
    </location>
</feature>
<proteinExistence type="evidence at transcript level"/>
<evidence type="ECO:0000250" key="1">
    <source>
        <dbReference type="UniProtKB" id="Q6P988"/>
    </source>
</evidence>
<evidence type="ECO:0000250" key="2">
    <source>
        <dbReference type="UniProtKB" id="Q9VUX3"/>
    </source>
</evidence>
<evidence type="ECO:0000255" key="3"/>
<evidence type="ECO:0000255" key="4">
    <source>
        <dbReference type="PROSITE-ProRule" id="PRU00498"/>
    </source>
</evidence>
<evidence type="ECO:0000269" key="5">
    <source>
    </source>
</evidence>
<evidence type="ECO:0000303" key="6">
    <source>
    </source>
</evidence>
<evidence type="ECO:0000305" key="7"/>
<evidence type="ECO:0000305" key="8">
    <source>
    </source>
</evidence>
<evidence type="ECO:0000312" key="9">
    <source>
        <dbReference type="EMBL" id="AJQ30101.1"/>
    </source>
</evidence>
<reference key="1">
    <citation type="journal article" date="2015" name="Dev. Cell">
        <title>Notum is required for neural and head induction via Wnt deacylation, oxidation, and inactivation.</title>
        <authorList>
            <person name="Zhang X."/>
            <person name="Cheong S.M."/>
            <person name="Amado N.G."/>
            <person name="Reis A.H."/>
            <person name="MacDonald B.T."/>
            <person name="Zebisch M."/>
            <person name="Jones E.Y."/>
            <person name="Abreu J.G."/>
            <person name="He X."/>
        </authorList>
    </citation>
    <scope>NUCLEOTIDE SEQUENCE [MRNA]</scope>
    <scope>FUNCTION</scope>
    <scope>TISSUE SPECIFICITY</scope>
    <scope>DEVELOPMENTAL STAGE</scope>
</reference>
<dbReference type="EC" id="3.1.1.98" evidence="1"/>
<dbReference type="EMBL" id="KP781855">
    <property type="protein sequence ID" value="AJQ30101.1"/>
    <property type="molecule type" value="mRNA"/>
</dbReference>
<dbReference type="RefSeq" id="XP_018089834.1">
    <property type="nucleotide sequence ID" value="XM_018234345.1"/>
</dbReference>
<dbReference type="SMR" id="A0A0D3QS99"/>
<dbReference type="GlyCosmos" id="A0A0D3QS99">
    <property type="glycosylation" value="1 site, No reported glycans"/>
</dbReference>
<dbReference type="DNASU" id="444338"/>
<dbReference type="GeneID" id="444338"/>
<dbReference type="AGR" id="Xenbase:XB-GENE-996989"/>
<dbReference type="CTD" id="444338"/>
<dbReference type="Xenbase" id="XB-GENE-996989">
    <property type="gene designation" value="notum.L"/>
</dbReference>
<dbReference type="OrthoDB" id="2015280at2759"/>
<dbReference type="BRENDA" id="3.1.1.98">
    <property type="organism ID" value="6725"/>
</dbReference>
<dbReference type="Proteomes" id="UP000186698">
    <property type="component" value="Chromosome 9_10L"/>
</dbReference>
<dbReference type="Bgee" id="444338">
    <property type="expression patterns" value="Expressed in internal ear and 15 other cell types or tissues"/>
</dbReference>
<dbReference type="GO" id="GO:0005576">
    <property type="term" value="C:extracellular region"/>
    <property type="evidence" value="ECO:0007669"/>
    <property type="project" value="UniProtKB-SubCell"/>
</dbReference>
<dbReference type="GO" id="GO:1990699">
    <property type="term" value="F:palmitoleyl hydrolase activity"/>
    <property type="evidence" value="ECO:0000318"/>
    <property type="project" value="GO_Central"/>
</dbReference>
<dbReference type="GO" id="GO:0140776">
    <property type="term" value="F:protein-containing complex destabilizing activity"/>
    <property type="evidence" value="ECO:0000314"/>
    <property type="project" value="UniProtKB"/>
</dbReference>
<dbReference type="GO" id="GO:0090090">
    <property type="term" value="P:negative regulation of canonical Wnt signaling pathway"/>
    <property type="evidence" value="ECO:0000318"/>
    <property type="project" value="GO_Central"/>
</dbReference>
<dbReference type="GO" id="GO:0030178">
    <property type="term" value="P:negative regulation of Wnt signaling pathway"/>
    <property type="evidence" value="ECO:0000314"/>
    <property type="project" value="UniProtKB"/>
</dbReference>
<dbReference type="GO" id="GO:0016055">
    <property type="term" value="P:Wnt signaling pathway"/>
    <property type="evidence" value="ECO:0007669"/>
    <property type="project" value="UniProtKB-KW"/>
</dbReference>
<dbReference type="InterPro" id="IPR004963">
    <property type="entry name" value="PAE/NOTUM"/>
</dbReference>
<dbReference type="PANTHER" id="PTHR21562">
    <property type="entry name" value="NOTUM-RELATED"/>
    <property type="match status" value="1"/>
</dbReference>
<dbReference type="PANTHER" id="PTHR21562:SF7">
    <property type="entry name" value="PALMITOLEOYL-PROTEIN CARBOXYLESTERASE NOTUM"/>
    <property type="match status" value="1"/>
</dbReference>
<dbReference type="Pfam" id="PF03283">
    <property type="entry name" value="PAE"/>
    <property type="match status" value="1"/>
</dbReference>